<evidence type="ECO:0000250" key="1">
    <source>
        <dbReference type="UniProtKB" id="P16731"/>
    </source>
</evidence>
<evidence type="ECO:0000305" key="2"/>
<name>UL88_HCMVM</name>
<accession>F5H9F9</accession>
<organismHost>
    <name type="scientific">Homo sapiens</name>
    <name type="common">Human</name>
    <dbReference type="NCBI Taxonomy" id="9606"/>
</organismHost>
<feature type="chain" id="PRO_0000418289" description="Protein UL88">
    <location>
        <begin position="1"/>
        <end position="429"/>
    </location>
</feature>
<protein>
    <recommendedName>
        <fullName>Protein UL88</fullName>
    </recommendedName>
</protein>
<reference key="1">
    <citation type="journal article" date="2004" name="J. Gen. Virol.">
        <title>Genetic content of wild-type human cytomegalovirus.</title>
        <authorList>
            <person name="Dolan A."/>
            <person name="Cunningham C."/>
            <person name="Hector R.D."/>
            <person name="Hassan-Walker A.F."/>
            <person name="Lee L."/>
            <person name="Addison C."/>
            <person name="Dargan D.J."/>
            <person name="McGeoch D.J."/>
            <person name="Gatherer D."/>
            <person name="Emery V.C."/>
            <person name="Griffiths P.D."/>
            <person name="Sinzger C."/>
            <person name="McSharry B.P."/>
            <person name="Wilkinson G.W.G."/>
            <person name="Davison A.J."/>
        </authorList>
    </citation>
    <scope>NUCLEOTIDE SEQUENCE [LARGE SCALE GENOMIC DNA]</scope>
</reference>
<dbReference type="EMBL" id="AY446894">
    <property type="protein sequence ID" value="AAR31640.1"/>
    <property type="molecule type" value="Genomic_DNA"/>
</dbReference>
<dbReference type="RefSeq" id="YP_081536.1">
    <property type="nucleotide sequence ID" value="NC_006273.2"/>
</dbReference>
<dbReference type="BioGRID" id="1678062">
    <property type="interactions" value="1"/>
</dbReference>
<dbReference type="DNASU" id="3077509"/>
<dbReference type="GeneID" id="3077509"/>
<dbReference type="KEGG" id="vg:3077509"/>
<dbReference type="Reactome" id="R-HSA-9609690">
    <property type="pathway name" value="HCMV Early Events"/>
</dbReference>
<dbReference type="Reactome" id="R-HSA-9610379">
    <property type="pathway name" value="HCMV Late Events"/>
</dbReference>
<dbReference type="Proteomes" id="UP000000938">
    <property type="component" value="Segment"/>
</dbReference>
<dbReference type="GO" id="GO:0072517">
    <property type="term" value="C:host cell viral assembly compartment"/>
    <property type="evidence" value="ECO:0000304"/>
    <property type="project" value="Reactome"/>
</dbReference>
<dbReference type="GO" id="GO:0019033">
    <property type="term" value="C:viral tegument"/>
    <property type="evidence" value="ECO:0000304"/>
    <property type="project" value="Reactome"/>
</dbReference>
<dbReference type="InterPro" id="IPR007616">
    <property type="entry name" value="Herpes_U59/UL88"/>
</dbReference>
<dbReference type="Pfam" id="PF04529">
    <property type="entry name" value="Herpes_U59"/>
    <property type="match status" value="1"/>
</dbReference>
<proteinExistence type="inferred from homology"/>
<sequence length="429" mass="47689">MMEAAAAAAAAFRPEERPTPGWHDAALLMDDGTVREHAFRNGPLSQLIRRVLPPPPDAEDDVVFASELCFYCSGRFNRRSSVFSIYWQKHSDLVYALTGITHCAKLVVECGQLGSSRLRWRDGDASGEERRGDDDSRDELYDVPGIYMIRVNDGGSTGPRHVIWPGTSVLWAPDVVITTVQRRISAARALVNTFRQYFFLLERRSHEELVLCPPEMEERLAPLLQSATRGDSDMFDGVVASAYHRLRMSNIPRSSARLLEHCVGLAGAKKLLLLDVPRLENYFLCQVCLYELDEDEMGEEMLGMLAGKPEDAAVSGASGGFLLHRKTMKLAACLCLLLNSLHLHQEALEALDPPPPRVEENDLVNVVLRRYYRSHGGVQARTLAAARALLADYAETFSPLGSFTRLGYDRLVSADAGVSRRHLVALLRA</sequence>
<gene>
    <name type="primary">UL88</name>
</gene>
<comment type="function">
    <text evidence="1">Plays a role in incorporating a subset of tegument proteins into the virion.</text>
</comment>
<comment type="subunit">
    <text evidence="1">Interacts with UL48.</text>
</comment>
<comment type="subcellular location">
    <subcellularLocation>
        <location evidence="1">Virion</location>
    </subcellularLocation>
    <subcellularLocation>
        <location evidence="1">Virion tegument</location>
    </subcellularLocation>
    <subcellularLocation>
        <location evidence="1">Host cytoplasm</location>
    </subcellularLocation>
    <text evidence="1">Accumulates in a juxtanuclear location reminiscent of the viral cytoplasmic assembly compartment.</text>
</comment>
<comment type="similarity">
    <text evidence="2">Belongs to the herpesviridae U59/UL88 family.</text>
</comment>
<keyword id="KW-1035">Host cytoplasm</keyword>
<keyword id="KW-1185">Reference proteome</keyword>
<keyword id="KW-0946">Virion</keyword>
<keyword id="KW-0920">Virion tegument</keyword>
<organism>
    <name type="scientific">Human cytomegalovirus (strain Merlin)</name>
    <name type="common">HHV-5</name>
    <name type="synonym">Human herpesvirus 5</name>
    <dbReference type="NCBI Taxonomy" id="295027"/>
    <lineage>
        <taxon>Viruses</taxon>
        <taxon>Duplodnaviria</taxon>
        <taxon>Heunggongvirae</taxon>
        <taxon>Peploviricota</taxon>
        <taxon>Herviviricetes</taxon>
        <taxon>Herpesvirales</taxon>
        <taxon>Orthoherpesviridae</taxon>
        <taxon>Betaherpesvirinae</taxon>
        <taxon>Cytomegalovirus</taxon>
        <taxon>Cytomegalovirus humanbeta5</taxon>
        <taxon>Human cytomegalovirus</taxon>
    </lineage>
</organism>